<name>APT_WOLSU</name>
<accession>Q7M8W8</accession>
<gene>
    <name evidence="1" type="primary">apt</name>
    <name type="ordered locus">WS1350</name>
</gene>
<keyword id="KW-0963">Cytoplasm</keyword>
<keyword id="KW-0328">Glycosyltransferase</keyword>
<keyword id="KW-0660">Purine salvage</keyword>
<keyword id="KW-1185">Reference proteome</keyword>
<keyword id="KW-0808">Transferase</keyword>
<feature type="chain" id="PRO_0000149488" description="Adenine phosphoribosyltransferase">
    <location>
        <begin position="1"/>
        <end position="182"/>
    </location>
</feature>
<reference key="1">
    <citation type="journal article" date="2003" name="Proc. Natl. Acad. Sci. U.S.A.">
        <title>Complete genome sequence and analysis of Wolinella succinogenes.</title>
        <authorList>
            <person name="Baar C."/>
            <person name="Eppinger M."/>
            <person name="Raddatz G."/>
            <person name="Simon J."/>
            <person name="Lanz C."/>
            <person name="Klimmek O."/>
            <person name="Nandakumar R."/>
            <person name="Gross R."/>
            <person name="Rosinus A."/>
            <person name="Keller H."/>
            <person name="Jagtap P."/>
            <person name="Linke B."/>
            <person name="Meyer F."/>
            <person name="Lederer H."/>
            <person name="Schuster S.C."/>
        </authorList>
    </citation>
    <scope>NUCLEOTIDE SEQUENCE [LARGE SCALE GENOMIC DNA]</scope>
    <source>
        <strain>ATCC 29543 / DSM 1740 / CCUG 13145 / JCM 31913 / LMG 7466 / NCTC 11488 / FDC 602W</strain>
    </source>
</reference>
<organism>
    <name type="scientific">Wolinella succinogenes (strain ATCC 29543 / DSM 1740 / CCUG 13145 / JCM 31913 / LMG 7466 / NCTC 11488 / FDC 602W)</name>
    <name type="common">Vibrio succinogenes</name>
    <dbReference type="NCBI Taxonomy" id="273121"/>
    <lineage>
        <taxon>Bacteria</taxon>
        <taxon>Pseudomonadati</taxon>
        <taxon>Campylobacterota</taxon>
        <taxon>Epsilonproteobacteria</taxon>
        <taxon>Campylobacterales</taxon>
        <taxon>Helicobacteraceae</taxon>
        <taxon>Wolinella</taxon>
    </lineage>
</organism>
<comment type="function">
    <text evidence="1">Catalyzes a salvage reaction resulting in the formation of AMP, that is energically less costly than de novo synthesis.</text>
</comment>
<comment type="catalytic activity">
    <reaction evidence="1">
        <text>AMP + diphosphate = 5-phospho-alpha-D-ribose 1-diphosphate + adenine</text>
        <dbReference type="Rhea" id="RHEA:16609"/>
        <dbReference type="ChEBI" id="CHEBI:16708"/>
        <dbReference type="ChEBI" id="CHEBI:33019"/>
        <dbReference type="ChEBI" id="CHEBI:58017"/>
        <dbReference type="ChEBI" id="CHEBI:456215"/>
        <dbReference type="EC" id="2.4.2.7"/>
    </reaction>
</comment>
<comment type="pathway">
    <text evidence="1">Purine metabolism; AMP biosynthesis via salvage pathway; AMP from adenine: step 1/1.</text>
</comment>
<comment type="subunit">
    <text evidence="1">Homodimer.</text>
</comment>
<comment type="subcellular location">
    <subcellularLocation>
        <location evidence="1">Cytoplasm</location>
    </subcellularLocation>
</comment>
<comment type="similarity">
    <text evidence="1">Belongs to the purine/pyrimidine phosphoribosyltransferase family.</text>
</comment>
<dbReference type="EC" id="2.4.2.7" evidence="1"/>
<dbReference type="EMBL" id="BX571660">
    <property type="protein sequence ID" value="CAE10421.1"/>
    <property type="molecule type" value="Genomic_DNA"/>
</dbReference>
<dbReference type="RefSeq" id="WP_011139207.1">
    <property type="nucleotide sequence ID" value="NC_005090.1"/>
</dbReference>
<dbReference type="SMR" id="Q7M8W8"/>
<dbReference type="STRING" id="273121.WS1350"/>
<dbReference type="KEGG" id="wsu:WS1350"/>
<dbReference type="eggNOG" id="COG0503">
    <property type="taxonomic scope" value="Bacteria"/>
</dbReference>
<dbReference type="HOGENOM" id="CLU_063339_3_0_7"/>
<dbReference type="UniPathway" id="UPA00588">
    <property type="reaction ID" value="UER00646"/>
</dbReference>
<dbReference type="Proteomes" id="UP000000422">
    <property type="component" value="Chromosome"/>
</dbReference>
<dbReference type="GO" id="GO:0005737">
    <property type="term" value="C:cytoplasm"/>
    <property type="evidence" value="ECO:0007669"/>
    <property type="project" value="UniProtKB-SubCell"/>
</dbReference>
<dbReference type="GO" id="GO:0002055">
    <property type="term" value="F:adenine binding"/>
    <property type="evidence" value="ECO:0007669"/>
    <property type="project" value="TreeGrafter"/>
</dbReference>
<dbReference type="GO" id="GO:0003999">
    <property type="term" value="F:adenine phosphoribosyltransferase activity"/>
    <property type="evidence" value="ECO:0007669"/>
    <property type="project" value="UniProtKB-UniRule"/>
</dbReference>
<dbReference type="GO" id="GO:0016208">
    <property type="term" value="F:AMP binding"/>
    <property type="evidence" value="ECO:0007669"/>
    <property type="project" value="TreeGrafter"/>
</dbReference>
<dbReference type="GO" id="GO:0006168">
    <property type="term" value="P:adenine salvage"/>
    <property type="evidence" value="ECO:0007669"/>
    <property type="project" value="InterPro"/>
</dbReference>
<dbReference type="GO" id="GO:0044209">
    <property type="term" value="P:AMP salvage"/>
    <property type="evidence" value="ECO:0007669"/>
    <property type="project" value="UniProtKB-UniRule"/>
</dbReference>
<dbReference type="GO" id="GO:0006166">
    <property type="term" value="P:purine ribonucleoside salvage"/>
    <property type="evidence" value="ECO:0007669"/>
    <property type="project" value="UniProtKB-KW"/>
</dbReference>
<dbReference type="CDD" id="cd06223">
    <property type="entry name" value="PRTases_typeI"/>
    <property type="match status" value="1"/>
</dbReference>
<dbReference type="FunFam" id="3.40.50.2020:FF:000021">
    <property type="entry name" value="Adenine phosphoribosyltransferase"/>
    <property type="match status" value="1"/>
</dbReference>
<dbReference type="Gene3D" id="3.40.50.2020">
    <property type="match status" value="1"/>
</dbReference>
<dbReference type="HAMAP" id="MF_00004">
    <property type="entry name" value="Aden_phosphoribosyltr"/>
    <property type="match status" value="1"/>
</dbReference>
<dbReference type="InterPro" id="IPR005764">
    <property type="entry name" value="Ade_phspho_trans"/>
</dbReference>
<dbReference type="InterPro" id="IPR000836">
    <property type="entry name" value="PRibTrfase_dom"/>
</dbReference>
<dbReference type="InterPro" id="IPR029057">
    <property type="entry name" value="PRTase-like"/>
</dbReference>
<dbReference type="InterPro" id="IPR050054">
    <property type="entry name" value="UPRTase/APRTase"/>
</dbReference>
<dbReference type="NCBIfam" id="TIGR01090">
    <property type="entry name" value="apt"/>
    <property type="match status" value="1"/>
</dbReference>
<dbReference type="NCBIfam" id="NF002634">
    <property type="entry name" value="PRK02304.1-3"/>
    <property type="match status" value="1"/>
</dbReference>
<dbReference type="NCBIfam" id="NF002636">
    <property type="entry name" value="PRK02304.1-5"/>
    <property type="match status" value="1"/>
</dbReference>
<dbReference type="PANTHER" id="PTHR32315">
    <property type="entry name" value="ADENINE PHOSPHORIBOSYLTRANSFERASE"/>
    <property type="match status" value="1"/>
</dbReference>
<dbReference type="PANTHER" id="PTHR32315:SF3">
    <property type="entry name" value="ADENINE PHOSPHORIBOSYLTRANSFERASE"/>
    <property type="match status" value="1"/>
</dbReference>
<dbReference type="Pfam" id="PF00156">
    <property type="entry name" value="Pribosyltran"/>
    <property type="match status" value="1"/>
</dbReference>
<dbReference type="SUPFAM" id="SSF53271">
    <property type="entry name" value="PRTase-like"/>
    <property type="match status" value="1"/>
</dbReference>
<dbReference type="PROSITE" id="PS00103">
    <property type="entry name" value="PUR_PYR_PR_TRANSFER"/>
    <property type="match status" value="1"/>
</dbReference>
<protein>
    <recommendedName>
        <fullName evidence="1">Adenine phosphoribosyltransferase</fullName>
        <shortName evidence="1">APRT</shortName>
        <ecNumber evidence="1">2.4.2.7</ecNumber>
    </recommendedName>
</protein>
<proteinExistence type="inferred from homology"/>
<sequence>MSVLDENQKQFLLDSIRNIPDFPKPGIQFKDITTLLNDPKAFGFLIDFLTDRYARFELDYVAGIESRGFIFGAALAAKLEVGFVPIRKKGKLPSTTIAEKYSLEYGFDEVEIHIDAFREKEGSRVLLIDDLIATGGTAEAAVKLIQSAKGHCVEACFLLNLEELGGAKKVSNLAPLYTLLDI</sequence>
<evidence type="ECO:0000255" key="1">
    <source>
        <dbReference type="HAMAP-Rule" id="MF_00004"/>
    </source>
</evidence>